<accession>C1CCQ8</accession>
<keyword id="KW-0067">ATP-binding</keyword>
<keyword id="KW-0143">Chaperone</keyword>
<keyword id="KW-0547">Nucleotide-binding</keyword>
<keyword id="KW-0597">Phosphoprotein</keyword>
<keyword id="KW-0346">Stress response</keyword>
<proteinExistence type="inferred from homology"/>
<dbReference type="EMBL" id="CP000919">
    <property type="protein sequence ID" value="ACO19109.1"/>
    <property type="molecule type" value="Genomic_DNA"/>
</dbReference>
<dbReference type="RefSeq" id="WP_000034665.1">
    <property type="nucleotide sequence ID" value="NC_012466.1"/>
</dbReference>
<dbReference type="SMR" id="C1CCQ8"/>
<dbReference type="KEGG" id="sjj:SPJ_0483"/>
<dbReference type="HOGENOM" id="CLU_005965_2_4_9"/>
<dbReference type="Proteomes" id="UP000002206">
    <property type="component" value="Chromosome"/>
</dbReference>
<dbReference type="GO" id="GO:0005524">
    <property type="term" value="F:ATP binding"/>
    <property type="evidence" value="ECO:0007669"/>
    <property type="project" value="UniProtKB-UniRule"/>
</dbReference>
<dbReference type="GO" id="GO:0140662">
    <property type="term" value="F:ATP-dependent protein folding chaperone"/>
    <property type="evidence" value="ECO:0007669"/>
    <property type="project" value="InterPro"/>
</dbReference>
<dbReference type="GO" id="GO:0051082">
    <property type="term" value="F:unfolded protein binding"/>
    <property type="evidence" value="ECO:0007669"/>
    <property type="project" value="InterPro"/>
</dbReference>
<dbReference type="CDD" id="cd10234">
    <property type="entry name" value="ASKHA_NBD_HSP70_DnaK-like"/>
    <property type="match status" value="1"/>
</dbReference>
<dbReference type="FunFam" id="2.60.34.10:FF:000014">
    <property type="entry name" value="Chaperone protein DnaK HSP70"/>
    <property type="match status" value="1"/>
</dbReference>
<dbReference type="FunFam" id="1.20.1270.10:FF:000004">
    <property type="entry name" value="Molecular chaperone DnaK"/>
    <property type="match status" value="1"/>
</dbReference>
<dbReference type="FunFam" id="3.30.420.40:FF:000071">
    <property type="entry name" value="Molecular chaperone DnaK"/>
    <property type="match status" value="1"/>
</dbReference>
<dbReference type="FunFam" id="3.90.640.10:FF:000003">
    <property type="entry name" value="Molecular chaperone DnaK"/>
    <property type="match status" value="1"/>
</dbReference>
<dbReference type="Gene3D" id="1.20.1270.10">
    <property type="match status" value="1"/>
</dbReference>
<dbReference type="Gene3D" id="3.30.420.40">
    <property type="match status" value="2"/>
</dbReference>
<dbReference type="Gene3D" id="3.90.640.10">
    <property type="entry name" value="Actin, Chain A, domain 4"/>
    <property type="match status" value="1"/>
</dbReference>
<dbReference type="Gene3D" id="2.60.34.10">
    <property type="entry name" value="Substrate Binding Domain Of DNAk, Chain A, domain 1"/>
    <property type="match status" value="1"/>
</dbReference>
<dbReference type="HAMAP" id="MF_00332">
    <property type="entry name" value="DnaK"/>
    <property type="match status" value="1"/>
</dbReference>
<dbReference type="InterPro" id="IPR043129">
    <property type="entry name" value="ATPase_NBD"/>
</dbReference>
<dbReference type="InterPro" id="IPR012725">
    <property type="entry name" value="Chaperone_DnaK"/>
</dbReference>
<dbReference type="InterPro" id="IPR018181">
    <property type="entry name" value="Heat_shock_70_CS"/>
</dbReference>
<dbReference type="InterPro" id="IPR029048">
    <property type="entry name" value="HSP70_C_sf"/>
</dbReference>
<dbReference type="InterPro" id="IPR029047">
    <property type="entry name" value="HSP70_peptide-bd_sf"/>
</dbReference>
<dbReference type="InterPro" id="IPR013126">
    <property type="entry name" value="Hsp_70_fam"/>
</dbReference>
<dbReference type="NCBIfam" id="NF001413">
    <property type="entry name" value="PRK00290.1"/>
    <property type="match status" value="1"/>
</dbReference>
<dbReference type="NCBIfam" id="TIGR02350">
    <property type="entry name" value="prok_dnaK"/>
    <property type="match status" value="1"/>
</dbReference>
<dbReference type="PANTHER" id="PTHR19375">
    <property type="entry name" value="HEAT SHOCK PROTEIN 70KDA"/>
    <property type="match status" value="1"/>
</dbReference>
<dbReference type="Pfam" id="PF00012">
    <property type="entry name" value="HSP70"/>
    <property type="match status" value="1"/>
</dbReference>
<dbReference type="PRINTS" id="PR00301">
    <property type="entry name" value="HEATSHOCK70"/>
</dbReference>
<dbReference type="SUPFAM" id="SSF53067">
    <property type="entry name" value="Actin-like ATPase domain"/>
    <property type="match status" value="2"/>
</dbReference>
<dbReference type="SUPFAM" id="SSF100934">
    <property type="entry name" value="Heat shock protein 70kD (HSP70), C-terminal subdomain"/>
    <property type="match status" value="1"/>
</dbReference>
<dbReference type="SUPFAM" id="SSF100920">
    <property type="entry name" value="Heat shock protein 70kD (HSP70), peptide-binding domain"/>
    <property type="match status" value="1"/>
</dbReference>
<dbReference type="PROSITE" id="PS00297">
    <property type="entry name" value="HSP70_1"/>
    <property type="match status" value="1"/>
</dbReference>
<dbReference type="PROSITE" id="PS00329">
    <property type="entry name" value="HSP70_2"/>
    <property type="match status" value="1"/>
</dbReference>
<dbReference type="PROSITE" id="PS01036">
    <property type="entry name" value="HSP70_3"/>
    <property type="match status" value="1"/>
</dbReference>
<feature type="chain" id="PRO_1000133165" description="Chaperone protein DnaK">
    <location>
        <begin position="1"/>
        <end position="607"/>
    </location>
</feature>
<feature type="region of interest" description="Disordered" evidence="2">
    <location>
        <begin position="581"/>
        <end position="607"/>
    </location>
</feature>
<feature type="compositionally biased region" description="Low complexity" evidence="2">
    <location>
        <begin position="581"/>
        <end position="591"/>
    </location>
</feature>
<feature type="compositionally biased region" description="Acidic residues" evidence="2">
    <location>
        <begin position="598"/>
        <end position="607"/>
    </location>
</feature>
<feature type="modified residue" description="Phosphothreonine; by autocatalysis" evidence="1">
    <location>
        <position position="173"/>
    </location>
</feature>
<comment type="function">
    <text evidence="1">Acts as a chaperone.</text>
</comment>
<comment type="induction">
    <text evidence="1">By stress conditions e.g. heat shock.</text>
</comment>
<comment type="similarity">
    <text evidence="1">Belongs to the heat shock protein 70 family.</text>
</comment>
<protein>
    <recommendedName>
        <fullName evidence="1">Chaperone protein DnaK</fullName>
    </recommendedName>
    <alternativeName>
        <fullName evidence="1">HSP70</fullName>
    </alternativeName>
    <alternativeName>
        <fullName evidence="1">Heat shock 70 kDa protein</fullName>
    </alternativeName>
    <alternativeName>
        <fullName evidence="1">Heat shock protein 70</fullName>
    </alternativeName>
</protein>
<reference key="1">
    <citation type="journal article" date="2010" name="Genome Biol.">
        <title>Structure and dynamics of the pan-genome of Streptococcus pneumoniae and closely related species.</title>
        <authorList>
            <person name="Donati C."/>
            <person name="Hiller N.L."/>
            <person name="Tettelin H."/>
            <person name="Muzzi A."/>
            <person name="Croucher N.J."/>
            <person name="Angiuoli S.V."/>
            <person name="Oggioni M."/>
            <person name="Dunning Hotopp J.C."/>
            <person name="Hu F.Z."/>
            <person name="Riley D.R."/>
            <person name="Covacci A."/>
            <person name="Mitchell T.J."/>
            <person name="Bentley S.D."/>
            <person name="Kilian M."/>
            <person name="Ehrlich G.D."/>
            <person name="Rappuoli R."/>
            <person name="Moxon E.R."/>
            <person name="Masignani V."/>
        </authorList>
    </citation>
    <scope>NUCLEOTIDE SEQUENCE [LARGE SCALE GENOMIC DNA]</scope>
    <source>
        <strain>JJA</strain>
    </source>
</reference>
<evidence type="ECO:0000255" key="1">
    <source>
        <dbReference type="HAMAP-Rule" id="MF_00332"/>
    </source>
</evidence>
<evidence type="ECO:0000256" key="2">
    <source>
        <dbReference type="SAM" id="MobiDB-lite"/>
    </source>
</evidence>
<name>DNAK_STRZJ</name>
<sequence length="607" mass="64842">MSKIIGIDLGTTNSAVAVLEGTESKIIANPEGNRTTPSVVSFKNGEIIVGDAAKRQAVTNPDTVISIKSKMGTSEKVSANGKEYTPQEISAMILQYLKGYAEDYLGEKVTKAVITVPAYFNDAQRQATKDAGKIAGLEVERIVNEPTAAALAYGLDKTDKEEKILVFDLGGGTFDVSILELGDGVFDVLSTAGDNKLGGDDFDQKIIDHLVAEFKKENGIDLSTDKMAMQRLKDAAEKAKKDLSGVTSTQISLPFITAGEAGPLHLEMTLTRAKFDDLTRDLVERTKVPVRQALSDAGLSLSEIDEVILVGGSTRIPAVVEAVKAETGKEPNKSVNPDEVVAMGAAIQGGVITGDVKDVVLLDVTPLSLGIETMGGVFTKLIDRNTTIPTSKSQVFSTAADNQPAVDIHVLQGERPMAADNKTLGRFQLTDIPAAPRGIPQIEVTFDIDKNGIVSVKAKDLGTQKEQTIVIQSNSGLTDEEIDRMMKDAEANAEADKKRKEEVDLRNEVDQAIFATEKTIKETEGKGFDAERDAAQAALDDLKKAQEDNNLDDMKTKLEALNEKAQGLAVKLYEQAAAAQQAQEGAEGAQATGNAGDDVVDGEFTEK</sequence>
<organism>
    <name type="scientific">Streptococcus pneumoniae (strain JJA)</name>
    <dbReference type="NCBI Taxonomy" id="488222"/>
    <lineage>
        <taxon>Bacteria</taxon>
        <taxon>Bacillati</taxon>
        <taxon>Bacillota</taxon>
        <taxon>Bacilli</taxon>
        <taxon>Lactobacillales</taxon>
        <taxon>Streptococcaceae</taxon>
        <taxon>Streptococcus</taxon>
    </lineage>
</organism>
<gene>
    <name evidence="1" type="primary">dnaK</name>
    <name type="ordered locus">SPJ_0483</name>
</gene>